<evidence type="ECO:0000255" key="1">
    <source>
        <dbReference type="HAMAP-Rule" id="MF_00180"/>
    </source>
</evidence>
<protein>
    <recommendedName>
        <fullName evidence="1">3,4-dihydroxy-2-butanone 4-phosphate synthase</fullName>
        <shortName evidence="1">DHBP synthase</shortName>
        <ecNumber evidence="1">4.1.99.12</ecNumber>
    </recommendedName>
</protein>
<comment type="function">
    <text evidence="1">Catalyzes the conversion of D-ribulose 5-phosphate to formate and 3,4-dihydroxy-2-butanone 4-phosphate.</text>
</comment>
<comment type="catalytic activity">
    <reaction evidence="1">
        <text>D-ribulose 5-phosphate = (2S)-2-hydroxy-3-oxobutyl phosphate + formate + H(+)</text>
        <dbReference type="Rhea" id="RHEA:18457"/>
        <dbReference type="ChEBI" id="CHEBI:15378"/>
        <dbReference type="ChEBI" id="CHEBI:15740"/>
        <dbReference type="ChEBI" id="CHEBI:58121"/>
        <dbReference type="ChEBI" id="CHEBI:58830"/>
        <dbReference type="EC" id="4.1.99.12"/>
    </reaction>
</comment>
<comment type="cofactor">
    <cofactor evidence="1">
        <name>Mg(2+)</name>
        <dbReference type="ChEBI" id="CHEBI:18420"/>
    </cofactor>
    <cofactor evidence="1">
        <name>Mn(2+)</name>
        <dbReference type="ChEBI" id="CHEBI:29035"/>
    </cofactor>
    <text evidence="1">Binds 2 divalent metal cations per subunit. Magnesium or manganese.</text>
</comment>
<comment type="pathway">
    <text evidence="1">Cofactor biosynthesis; riboflavin biosynthesis; 2-hydroxy-3-oxobutyl phosphate from D-ribulose 5-phosphate: step 1/1.</text>
</comment>
<comment type="subunit">
    <text evidence="1">Homodimer.</text>
</comment>
<comment type="similarity">
    <text evidence="1">Belongs to the DHBP synthase family.</text>
</comment>
<organism>
    <name type="scientific">Salmonella dublin (strain CT_02021853)</name>
    <dbReference type="NCBI Taxonomy" id="439851"/>
    <lineage>
        <taxon>Bacteria</taxon>
        <taxon>Pseudomonadati</taxon>
        <taxon>Pseudomonadota</taxon>
        <taxon>Gammaproteobacteria</taxon>
        <taxon>Enterobacterales</taxon>
        <taxon>Enterobacteriaceae</taxon>
        <taxon>Salmonella</taxon>
    </lineage>
</organism>
<feature type="chain" id="PRO_1000098284" description="3,4-dihydroxy-2-butanone 4-phosphate synthase">
    <location>
        <begin position="1"/>
        <end position="217"/>
    </location>
</feature>
<feature type="binding site" evidence="1">
    <location>
        <begin position="37"/>
        <end position="38"/>
    </location>
    <ligand>
        <name>D-ribulose 5-phosphate</name>
        <dbReference type="ChEBI" id="CHEBI:58121"/>
    </ligand>
</feature>
<feature type="binding site" evidence="1">
    <location>
        <position position="38"/>
    </location>
    <ligand>
        <name>Mg(2+)</name>
        <dbReference type="ChEBI" id="CHEBI:18420"/>
        <label>1</label>
    </ligand>
</feature>
<feature type="binding site" evidence="1">
    <location>
        <position position="38"/>
    </location>
    <ligand>
        <name>Mg(2+)</name>
        <dbReference type="ChEBI" id="CHEBI:18420"/>
        <label>2</label>
    </ligand>
</feature>
<feature type="binding site" evidence="1">
    <location>
        <position position="42"/>
    </location>
    <ligand>
        <name>D-ribulose 5-phosphate</name>
        <dbReference type="ChEBI" id="CHEBI:58121"/>
    </ligand>
</feature>
<feature type="binding site" evidence="1">
    <location>
        <begin position="150"/>
        <end position="154"/>
    </location>
    <ligand>
        <name>D-ribulose 5-phosphate</name>
        <dbReference type="ChEBI" id="CHEBI:58121"/>
    </ligand>
</feature>
<feature type="binding site" evidence="1">
    <location>
        <position position="153"/>
    </location>
    <ligand>
        <name>Mg(2+)</name>
        <dbReference type="ChEBI" id="CHEBI:18420"/>
        <label>2</label>
    </ligand>
</feature>
<feature type="binding site" evidence="1">
    <location>
        <position position="174"/>
    </location>
    <ligand>
        <name>D-ribulose 5-phosphate</name>
        <dbReference type="ChEBI" id="CHEBI:58121"/>
    </ligand>
</feature>
<feature type="site" description="Essential for catalytic activity" evidence="1">
    <location>
        <position position="136"/>
    </location>
</feature>
<feature type="site" description="Essential for catalytic activity" evidence="1">
    <location>
        <position position="174"/>
    </location>
</feature>
<proteinExistence type="inferred from homology"/>
<reference key="1">
    <citation type="journal article" date="2011" name="J. Bacteriol.">
        <title>Comparative genomics of 28 Salmonella enterica isolates: evidence for CRISPR-mediated adaptive sublineage evolution.</title>
        <authorList>
            <person name="Fricke W.F."/>
            <person name="Mammel M.K."/>
            <person name="McDermott P.F."/>
            <person name="Tartera C."/>
            <person name="White D.G."/>
            <person name="Leclerc J.E."/>
            <person name="Ravel J."/>
            <person name="Cebula T.A."/>
        </authorList>
    </citation>
    <scope>NUCLEOTIDE SEQUENCE [LARGE SCALE GENOMIC DNA]</scope>
    <source>
        <strain>CT_02021853</strain>
    </source>
</reference>
<name>RIBB_SALDC</name>
<gene>
    <name evidence="1" type="primary">ribB</name>
    <name type="ordered locus">SeD_A3548</name>
</gene>
<dbReference type="EC" id="4.1.99.12" evidence="1"/>
<dbReference type="EMBL" id="CP001144">
    <property type="protein sequence ID" value="ACH77901.1"/>
    <property type="molecule type" value="Genomic_DNA"/>
</dbReference>
<dbReference type="RefSeq" id="WP_001076978.1">
    <property type="nucleotide sequence ID" value="NC_011205.1"/>
</dbReference>
<dbReference type="SMR" id="B5FHS9"/>
<dbReference type="KEGG" id="sed:SeD_A3548"/>
<dbReference type="HOGENOM" id="CLU_020273_3_0_6"/>
<dbReference type="UniPathway" id="UPA00275">
    <property type="reaction ID" value="UER00399"/>
</dbReference>
<dbReference type="Proteomes" id="UP000008322">
    <property type="component" value="Chromosome"/>
</dbReference>
<dbReference type="GO" id="GO:0005829">
    <property type="term" value="C:cytosol"/>
    <property type="evidence" value="ECO:0007669"/>
    <property type="project" value="TreeGrafter"/>
</dbReference>
<dbReference type="GO" id="GO:0008686">
    <property type="term" value="F:3,4-dihydroxy-2-butanone-4-phosphate synthase activity"/>
    <property type="evidence" value="ECO:0007669"/>
    <property type="project" value="UniProtKB-UniRule"/>
</dbReference>
<dbReference type="GO" id="GO:0000287">
    <property type="term" value="F:magnesium ion binding"/>
    <property type="evidence" value="ECO:0007669"/>
    <property type="project" value="UniProtKB-UniRule"/>
</dbReference>
<dbReference type="GO" id="GO:0030145">
    <property type="term" value="F:manganese ion binding"/>
    <property type="evidence" value="ECO:0007669"/>
    <property type="project" value="UniProtKB-UniRule"/>
</dbReference>
<dbReference type="GO" id="GO:0009231">
    <property type="term" value="P:riboflavin biosynthetic process"/>
    <property type="evidence" value="ECO:0007669"/>
    <property type="project" value="UniProtKB-UniRule"/>
</dbReference>
<dbReference type="FunFam" id="3.90.870.10:FF:000002">
    <property type="entry name" value="3,4-dihydroxy-2-butanone 4-phosphate synthase"/>
    <property type="match status" value="1"/>
</dbReference>
<dbReference type="Gene3D" id="3.90.870.10">
    <property type="entry name" value="DHBP synthase"/>
    <property type="match status" value="1"/>
</dbReference>
<dbReference type="HAMAP" id="MF_00180">
    <property type="entry name" value="RibB"/>
    <property type="match status" value="1"/>
</dbReference>
<dbReference type="InterPro" id="IPR017945">
    <property type="entry name" value="DHBP_synth_RibB-like_a/b_dom"/>
</dbReference>
<dbReference type="InterPro" id="IPR000422">
    <property type="entry name" value="DHBP_synthase_RibB"/>
</dbReference>
<dbReference type="NCBIfam" id="TIGR00506">
    <property type="entry name" value="ribB"/>
    <property type="match status" value="1"/>
</dbReference>
<dbReference type="PANTHER" id="PTHR21327:SF38">
    <property type="entry name" value="3,4-DIHYDROXY-2-BUTANONE 4-PHOSPHATE SYNTHASE"/>
    <property type="match status" value="1"/>
</dbReference>
<dbReference type="PANTHER" id="PTHR21327">
    <property type="entry name" value="GTP CYCLOHYDROLASE II-RELATED"/>
    <property type="match status" value="1"/>
</dbReference>
<dbReference type="Pfam" id="PF00926">
    <property type="entry name" value="DHBP_synthase"/>
    <property type="match status" value="1"/>
</dbReference>
<dbReference type="SUPFAM" id="SSF55821">
    <property type="entry name" value="YrdC/RibB"/>
    <property type="match status" value="1"/>
</dbReference>
<sequence length="217" mass="23310">MNQTLLSSFGTPFERVELALDALREGRGVMVLDDEDRENEGDMIFPAETMTVEQMALTIRHGSGIVCLCITEDRRKQLDLPMMVENNTSAYGTGFTVTIEAAEGVTTGVSAADRVTTVRAAIKDGAKPSDLNRPGHVFPLRAQAGGVLTRGGHTEATIDLMTLAGFKPAGVLCELTNDDGTMARAPECIAFAGQHNMAVVTIEDLVAYRQAHERKAS</sequence>
<keyword id="KW-0456">Lyase</keyword>
<keyword id="KW-0460">Magnesium</keyword>
<keyword id="KW-0464">Manganese</keyword>
<keyword id="KW-0479">Metal-binding</keyword>
<keyword id="KW-0686">Riboflavin biosynthesis</keyword>
<accession>B5FHS9</accession>